<keyword id="KW-0007">Acetylation</keyword>
<keyword id="KW-0131">Cell cycle</keyword>
<keyword id="KW-0963">Cytoplasm</keyword>
<keyword id="KW-0539">Nucleus</keyword>
<keyword id="KW-0597">Phosphoprotein</keyword>
<keyword id="KW-1185">Reference proteome</keyword>
<dbReference type="EMBL" id="BC091256">
    <property type="protein sequence ID" value="AAH91256.1"/>
    <property type="molecule type" value="mRNA"/>
</dbReference>
<dbReference type="RefSeq" id="NP_001013222.1">
    <property type="nucleotide sequence ID" value="NM_001013204.1"/>
</dbReference>
<dbReference type="SMR" id="Q5BK06"/>
<dbReference type="FunCoup" id="Q5BK06">
    <property type="interactions" value="1428"/>
</dbReference>
<dbReference type="STRING" id="10116.ENSRNOP00000015472"/>
<dbReference type="PhosphoSitePlus" id="Q5BK06"/>
<dbReference type="PaxDb" id="10116-ENSRNOP00000015472"/>
<dbReference type="GeneID" id="362201"/>
<dbReference type="KEGG" id="rno:362201"/>
<dbReference type="UCSC" id="RGD:1304669">
    <property type="organism name" value="rat"/>
</dbReference>
<dbReference type="AGR" id="RGD:1304669"/>
<dbReference type="CTD" id="23582"/>
<dbReference type="RGD" id="1304669">
    <property type="gene designation" value="Ccndbp1"/>
</dbReference>
<dbReference type="eggNOG" id="ENOG502SGCW">
    <property type="taxonomic scope" value="Eukaryota"/>
</dbReference>
<dbReference type="HOGENOM" id="CLU_067580_0_0_1"/>
<dbReference type="InParanoid" id="Q5BK06"/>
<dbReference type="PhylomeDB" id="Q5BK06"/>
<dbReference type="TreeFam" id="TF336444"/>
<dbReference type="PRO" id="PR:Q5BK06"/>
<dbReference type="Proteomes" id="UP000002494">
    <property type="component" value="Unplaced"/>
</dbReference>
<dbReference type="GO" id="GO:0005737">
    <property type="term" value="C:cytoplasm"/>
    <property type="evidence" value="ECO:0007669"/>
    <property type="project" value="UniProtKB-SubCell"/>
</dbReference>
<dbReference type="GO" id="GO:0005634">
    <property type="term" value="C:nucleus"/>
    <property type="evidence" value="ECO:0000266"/>
    <property type="project" value="RGD"/>
</dbReference>
<dbReference type="FunFam" id="1.20.1410.10:FF:000005">
    <property type="entry name" value="cyclin-D1-binding protein 1"/>
    <property type="match status" value="1"/>
</dbReference>
<dbReference type="FunFam" id="1.20.1420.10:FF:000008">
    <property type="entry name" value="Cyclin-D1-binding protein 1 homolog"/>
    <property type="match status" value="1"/>
</dbReference>
<dbReference type="Gene3D" id="1.20.1410.10">
    <property type="entry name" value="I/LWEQ domain"/>
    <property type="match status" value="1"/>
</dbReference>
<dbReference type="Gene3D" id="1.20.1420.10">
    <property type="entry name" value="Talin, central domain"/>
    <property type="match status" value="1"/>
</dbReference>
<dbReference type="InterPro" id="IPR026907">
    <property type="entry name" value="GCIP-like"/>
</dbReference>
<dbReference type="InterPro" id="IPR049317">
    <property type="entry name" value="GCIP-like_N"/>
</dbReference>
<dbReference type="InterPro" id="IPR049318">
    <property type="entry name" value="GCIP_C"/>
</dbReference>
<dbReference type="PANTHER" id="PTHR15492">
    <property type="entry name" value="CYCLIN D1-BINDING PROTEIN 1"/>
    <property type="match status" value="1"/>
</dbReference>
<dbReference type="PANTHER" id="PTHR15492:SF1">
    <property type="entry name" value="CYCLIN-D1-BINDING PROTEIN 1"/>
    <property type="match status" value="1"/>
</dbReference>
<dbReference type="Pfam" id="PF20936">
    <property type="entry name" value="GCIP_C"/>
    <property type="match status" value="1"/>
</dbReference>
<dbReference type="Pfam" id="PF13324">
    <property type="entry name" value="GCIP_N"/>
    <property type="match status" value="1"/>
</dbReference>
<feature type="initiator methionine" description="Removed" evidence="2">
    <location>
        <position position="1"/>
    </location>
</feature>
<feature type="chain" id="PRO_0000323376" description="Cyclin-D1-binding protein 1">
    <location>
        <begin position="2"/>
        <end position="355"/>
    </location>
</feature>
<feature type="region of interest" description="Required for interaction with CCND1" evidence="1">
    <location>
        <begin position="2"/>
        <end position="205"/>
    </location>
</feature>
<feature type="region of interest" description="Interaction with RPLP0" evidence="1">
    <location>
        <begin position="2"/>
        <end position="187"/>
    </location>
</feature>
<feature type="region of interest" description="Interaction with TCF3" evidence="1">
    <location>
        <begin position="2"/>
        <end position="181"/>
    </location>
</feature>
<feature type="region of interest" description="Interaction with TCF3" evidence="1">
    <location>
        <begin position="147"/>
        <end position="355"/>
    </location>
</feature>
<feature type="region of interest" description="Disordered" evidence="3">
    <location>
        <begin position="203"/>
        <end position="224"/>
    </location>
</feature>
<feature type="region of interest" description="Interaction with RPLP0" evidence="1">
    <location>
        <begin position="235"/>
        <end position="355"/>
    </location>
</feature>
<feature type="modified residue" description="N-acetylalanine" evidence="2">
    <location>
        <position position="2"/>
    </location>
</feature>
<reference key="1">
    <citation type="journal article" date="2004" name="Genome Res.">
        <title>The status, quality, and expansion of the NIH full-length cDNA project: the Mammalian Gene Collection (MGC).</title>
        <authorList>
            <consortium name="The MGC Project Team"/>
        </authorList>
    </citation>
    <scope>NUCLEOTIDE SEQUENCE [LARGE SCALE MRNA]</scope>
    <source>
        <tissue>Spleen</tissue>
    </source>
</reference>
<reference key="2">
    <citation type="journal article" date="2000" name="Hepatology">
        <title>Human homologue of maid: a dominant inhibitory helix-loop-helix protein associated with liver-specific gene expression.</title>
        <authorList>
            <person name="Terai S."/>
            <person name="Aoki H."/>
            <person name="Thorgeirsson S.S."/>
        </authorList>
    </citation>
    <scope>INDUCTION</scope>
</reference>
<evidence type="ECO:0000250" key="1"/>
<evidence type="ECO:0000250" key="2">
    <source>
        <dbReference type="UniProtKB" id="O95273"/>
    </source>
</evidence>
<evidence type="ECO:0000256" key="3">
    <source>
        <dbReference type="SAM" id="MobiDB-lite"/>
    </source>
</evidence>
<evidence type="ECO:0000269" key="4">
    <source>
    </source>
</evidence>
<evidence type="ECO:0000305" key="5"/>
<name>CCDB1_RAT</name>
<proteinExistence type="evidence at transcript level"/>
<gene>
    <name type="primary">Ccndbp1</name>
</gene>
<sequence length="355" mass="39066">MASSTTPVSFLAPPLEQLRHLAEELRSLLPRVRVGEAQETAEEFNREMFWRRLNEAAMKVSGEATVLTTLFSKIPSPSPQETQRICEQVHIATEEVIAAYYTFPKDQGITLRKLVRNAVLDIVDGTAQLLDALLAAPSQSPENGDLISCNSVSVACQQVAEIPKDNKAAALLMLTKSVDLVKDAHEEMEQAVEECDPYCGLLDDSEDNSDSHHNEDGVGLPSNRDSYWSEEDQALITPCLALVRASRASLKKIRILVAENGRKDQVAQLDDIVDISDEISPSVDDLVLSVYPPVCHLTVRITSAKLVSVLIKALEITKASHVSPQPGDSWIPLLINAVDHCMDRIKELTQRAVEL</sequence>
<organism>
    <name type="scientific">Rattus norvegicus</name>
    <name type="common">Rat</name>
    <dbReference type="NCBI Taxonomy" id="10116"/>
    <lineage>
        <taxon>Eukaryota</taxon>
        <taxon>Metazoa</taxon>
        <taxon>Chordata</taxon>
        <taxon>Craniata</taxon>
        <taxon>Vertebrata</taxon>
        <taxon>Euteleostomi</taxon>
        <taxon>Mammalia</taxon>
        <taxon>Eutheria</taxon>
        <taxon>Euarchontoglires</taxon>
        <taxon>Glires</taxon>
        <taxon>Rodentia</taxon>
        <taxon>Myomorpha</taxon>
        <taxon>Muroidea</taxon>
        <taxon>Muridae</taxon>
        <taxon>Murinae</taxon>
        <taxon>Rattus</taxon>
    </lineage>
</organism>
<protein>
    <recommendedName>
        <fullName>Cyclin-D1-binding protein 1</fullName>
    </recommendedName>
</protein>
<comment type="function">
    <text evidence="1">May negatively regulate cell cycle progression. May act at least in part via inhibition of the cyclin-D1/CDK4 complex, thereby preventing phosphorylation of RB1 and blocking E2F-dependent transcription (By similarity).</text>
</comment>
<comment type="subunit">
    <text evidence="1">Interacts with CCND1 and GRAP2. May also interact with COPS5, RPLP0, SIRT6, SYF2 and TCF3.</text>
</comment>
<comment type="subcellular location">
    <subcellularLocation>
        <location evidence="1">Cytoplasm</location>
    </subcellularLocation>
    <subcellularLocation>
        <location evidence="1">Nucleus</location>
    </subcellularLocation>
</comment>
<comment type="induction">
    <text evidence="4">Expression is induced by partial hepatectomy.</text>
</comment>
<comment type="PTM">
    <text evidence="1">Phosphorylated.</text>
</comment>
<comment type="similarity">
    <text evidence="5">Belongs to the CCNDBP1 family.</text>
</comment>
<accession>Q5BK06</accession>